<comment type="function">
    <text evidence="1">Mitochondrial transporter that mediates uptake of thiamine pyrophosphate (ThPP) into mitochondria.</text>
</comment>
<comment type="subcellular location">
    <subcellularLocation>
        <location evidence="1">Mitochondrion inner membrane</location>
        <topology evidence="1">Multi-pass membrane protein</topology>
    </subcellularLocation>
</comment>
<comment type="similarity">
    <text evidence="3">Belongs to the mitochondrial carrier (TC 2.A.29) family.</text>
</comment>
<evidence type="ECO:0000250" key="1"/>
<evidence type="ECO:0000255" key="2"/>
<evidence type="ECO:0000305" key="3"/>
<gene>
    <name type="primary">tpc1</name>
    <name type="ORF">SS1G_07755</name>
</gene>
<protein>
    <recommendedName>
        <fullName>Mitochondrial thiamine pyrophosphate carrier 1</fullName>
    </recommendedName>
</protein>
<dbReference type="EMBL" id="CH476630">
    <property type="protein sequence ID" value="EDN91894.1"/>
    <property type="molecule type" value="Genomic_DNA"/>
</dbReference>
<dbReference type="RefSeq" id="XP_001591130.1">
    <property type="nucleotide sequence ID" value="XM_001591080.1"/>
</dbReference>
<dbReference type="SMR" id="A7ER02"/>
<dbReference type="FunCoup" id="A7ER02">
    <property type="interactions" value="24"/>
</dbReference>
<dbReference type="STRING" id="665079.A7ER02"/>
<dbReference type="GeneID" id="5487455"/>
<dbReference type="KEGG" id="ssl:SS1G_07755"/>
<dbReference type="VEuPathDB" id="FungiDB:sscle_11g083620"/>
<dbReference type="InParanoid" id="A7ER02"/>
<dbReference type="OMA" id="MYVCYGA"/>
<dbReference type="OrthoDB" id="18574at2759"/>
<dbReference type="Proteomes" id="UP000001312">
    <property type="component" value="Unassembled WGS sequence"/>
</dbReference>
<dbReference type="GO" id="GO:0005743">
    <property type="term" value="C:mitochondrial inner membrane"/>
    <property type="evidence" value="ECO:0000318"/>
    <property type="project" value="GO_Central"/>
</dbReference>
<dbReference type="GO" id="GO:0015234">
    <property type="term" value="F:thiamine transmembrane transporter activity"/>
    <property type="evidence" value="ECO:0000318"/>
    <property type="project" value="GO_Central"/>
</dbReference>
<dbReference type="GO" id="GO:0030974">
    <property type="term" value="P:thiamine pyrophosphate transmembrane transport"/>
    <property type="evidence" value="ECO:0000318"/>
    <property type="project" value="GO_Central"/>
</dbReference>
<dbReference type="FunFam" id="1.50.40.10:FF:000011">
    <property type="entry name" value="Mitochondrial thiamine pyrophosphate carrier 1"/>
    <property type="match status" value="1"/>
</dbReference>
<dbReference type="Gene3D" id="1.50.40.10">
    <property type="entry name" value="Mitochondrial carrier domain"/>
    <property type="match status" value="1"/>
</dbReference>
<dbReference type="InterPro" id="IPR002067">
    <property type="entry name" value="Mit_carrier"/>
</dbReference>
<dbReference type="InterPro" id="IPR050567">
    <property type="entry name" value="Mitochondrial_Carrier"/>
</dbReference>
<dbReference type="InterPro" id="IPR018108">
    <property type="entry name" value="Mitochondrial_sb/sol_carrier"/>
</dbReference>
<dbReference type="InterPro" id="IPR023395">
    <property type="entry name" value="Mt_carrier_dom_sf"/>
</dbReference>
<dbReference type="PANTHER" id="PTHR45624">
    <property type="entry name" value="MITOCHONDRIAL BASIC AMINO ACIDS TRANSPORTER-RELATED"/>
    <property type="match status" value="1"/>
</dbReference>
<dbReference type="PANTHER" id="PTHR45624:SF53">
    <property type="entry name" value="MITOCHONDRIAL CARRIER PROTEIN"/>
    <property type="match status" value="1"/>
</dbReference>
<dbReference type="Pfam" id="PF00153">
    <property type="entry name" value="Mito_carr"/>
    <property type="match status" value="3"/>
</dbReference>
<dbReference type="PRINTS" id="PR00926">
    <property type="entry name" value="MITOCARRIER"/>
</dbReference>
<dbReference type="SUPFAM" id="SSF103506">
    <property type="entry name" value="Mitochondrial carrier"/>
    <property type="match status" value="1"/>
</dbReference>
<dbReference type="PROSITE" id="PS50920">
    <property type="entry name" value="SOLCAR"/>
    <property type="match status" value="3"/>
</dbReference>
<accession>A7ER02</accession>
<feature type="chain" id="PRO_0000320474" description="Mitochondrial thiamine pyrophosphate carrier 1">
    <location>
        <begin position="1"/>
        <end position="322"/>
    </location>
</feature>
<feature type="transmembrane region" description="Helical; Name=1" evidence="2">
    <location>
        <begin position="18"/>
        <end position="38"/>
    </location>
</feature>
<feature type="transmembrane region" description="Helical; Name=2" evidence="2">
    <location>
        <begin position="92"/>
        <end position="108"/>
    </location>
</feature>
<feature type="transmembrane region" description="Helical; Name=3" evidence="2">
    <location>
        <begin position="128"/>
        <end position="148"/>
    </location>
</feature>
<feature type="transmembrane region" description="Helical; Name=4" evidence="2">
    <location>
        <begin position="180"/>
        <end position="200"/>
    </location>
</feature>
<feature type="transmembrane region" description="Helical; Name=5" evidence="2">
    <location>
        <begin position="221"/>
        <end position="241"/>
    </location>
</feature>
<feature type="transmembrane region" description="Helical; Name=6" evidence="2">
    <location>
        <begin position="285"/>
        <end position="302"/>
    </location>
</feature>
<feature type="repeat" description="Solcar 1">
    <location>
        <begin position="12"/>
        <end position="111"/>
    </location>
</feature>
<feature type="repeat" description="Solcar 2">
    <location>
        <begin position="122"/>
        <end position="208"/>
    </location>
</feature>
<feature type="repeat" description="Solcar 3">
    <location>
        <begin position="215"/>
        <end position="310"/>
    </location>
</feature>
<reference key="1">
    <citation type="journal article" date="2011" name="PLoS Genet.">
        <title>Genomic analysis of the necrotrophic fungal pathogens Sclerotinia sclerotiorum and Botrytis cinerea.</title>
        <authorList>
            <person name="Amselem J."/>
            <person name="Cuomo C.A."/>
            <person name="van Kan J.A.L."/>
            <person name="Viaud M."/>
            <person name="Benito E.P."/>
            <person name="Couloux A."/>
            <person name="Coutinho P.M."/>
            <person name="de Vries R.P."/>
            <person name="Dyer P.S."/>
            <person name="Fillinger S."/>
            <person name="Fournier E."/>
            <person name="Gout L."/>
            <person name="Hahn M."/>
            <person name="Kohn L."/>
            <person name="Lapalu N."/>
            <person name="Plummer K.M."/>
            <person name="Pradier J.-M."/>
            <person name="Quevillon E."/>
            <person name="Sharon A."/>
            <person name="Simon A."/>
            <person name="ten Have A."/>
            <person name="Tudzynski B."/>
            <person name="Tudzynski P."/>
            <person name="Wincker P."/>
            <person name="Andrew M."/>
            <person name="Anthouard V."/>
            <person name="Beever R.E."/>
            <person name="Beffa R."/>
            <person name="Benoit I."/>
            <person name="Bouzid O."/>
            <person name="Brault B."/>
            <person name="Chen Z."/>
            <person name="Choquer M."/>
            <person name="Collemare J."/>
            <person name="Cotton P."/>
            <person name="Danchin E.G."/>
            <person name="Da Silva C."/>
            <person name="Gautier A."/>
            <person name="Giraud C."/>
            <person name="Giraud T."/>
            <person name="Gonzalez C."/>
            <person name="Grossetete S."/>
            <person name="Gueldener U."/>
            <person name="Henrissat B."/>
            <person name="Howlett B.J."/>
            <person name="Kodira C."/>
            <person name="Kretschmer M."/>
            <person name="Lappartient A."/>
            <person name="Leroch M."/>
            <person name="Levis C."/>
            <person name="Mauceli E."/>
            <person name="Neuveglise C."/>
            <person name="Oeser B."/>
            <person name="Pearson M."/>
            <person name="Poulain J."/>
            <person name="Poussereau N."/>
            <person name="Quesneville H."/>
            <person name="Rascle C."/>
            <person name="Schumacher J."/>
            <person name="Segurens B."/>
            <person name="Sexton A."/>
            <person name="Silva E."/>
            <person name="Sirven C."/>
            <person name="Soanes D.M."/>
            <person name="Talbot N.J."/>
            <person name="Templeton M."/>
            <person name="Yandava C."/>
            <person name="Yarden O."/>
            <person name="Zeng Q."/>
            <person name="Rollins J.A."/>
            <person name="Lebrun M.-H."/>
            <person name="Dickman M."/>
        </authorList>
    </citation>
    <scope>NUCLEOTIDE SEQUENCE [LARGE SCALE GENOMIC DNA]</scope>
    <source>
        <strain>ATCC 18683 / 1980 / Ss-1</strain>
    </source>
</reference>
<keyword id="KW-0472">Membrane</keyword>
<keyword id="KW-0496">Mitochondrion</keyword>
<keyword id="KW-0999">Mitochondrion inner membrane</keyword>
<keyword id="KW-1185">Reference proteome</keyword>
<keyword id="KW-0677">Repeat</keyword>
<keyword id="KW-0812">Transmembrane</keyword>
<keyword id="KW-1133">Transmembrane helix</keyword>
<keyword id="KW-0813">Transport</keyword>
<organism>
    <name type="scientific">Sclerotinia sclerotiorum (strain ATCC 18683 / 1980 / Ss-1)</name>
    <name type="common">White mold</name>
    <name type="synonym">Whetzelinia sclerotiorum</name>
    <dbReference type="NCBI Taxonomy" id="665079"/>
    <lineage>
        <taxon>Eukaryota</taxon>
        <taxon>Fungi</taxon>
        <taxon>Dikarya</taxon>
        <taxon>Ascomycota</taxon>
        <taxon>Pezizomycotina</taxon>
        <taxon>Leotiomycetes</taxon>
        <taxon>Helotiales</taxon>
        <taxon>Sclerotiniaceae</taxon>
        <taxon>Sclerotinia</taxon>
    </lineage>
</organism>
<sequence length="322" mass="35312">MSGSAEHLKDEGSKTQSMIAGATAGLIARFVIAPLDVVKIRLQLQSHSASDPLSHRDLRGSLIYKGTLPTIKRIFREEGLSALWKGNVPAELMYVSYSAIQFTTYRSVTLALQDTVGEHRMPAAAESFIAGASAGAVATTATYPLDLLRTRFAAQGVERIYTSLRASIRDIAVNEGPRGFFQGLGAGVGQIIPYMGIFFATYETLRVPLGTLHMPFGSGDATAGVLASVIAKTGIFPFDLIRKRLQVQGPTRERYVHKNIPVYNGVFRTMRHIIQNEGYRGLYRGLTVSLFKAAPASAVTMWTYERVLRLLLKWEKAQESPT</sequence>
<name>TPC1_SCLS1</name>
<proteinExistence type="inferred from homology"/>